<proteinExistence type="evidence at transcript level"/>
<name>H3_STRDR</name>
<comment type="function">
    <text>Core component of nucleosome. Nucleosomes wrap and compact DNA into chromatin, limiting DNA accessibility to the cellular machineries which require DNA as a template. Histones thereby play a central role in transcription regulation, DNA repair, DNA replication and chromosomal stability. DNA accessibility is regulated via a complex set of post-translational modifications of histones, also called histone code, and nucleosome remodeling.</text>
</comment>
<comment type="subunit">
    <text>The nucleosome is a histone octamer containing two molecules each of H2A, H2B, H3 and H4 assembled in one H3-H4 heterotetramer and two H2A-H2B heterodimers. The octamer wraps approximately 147 bp of DNA.</text>
</comment>
<comment type="subcellular location">
    <subcellularLocation>
        <location evidence="1">Nucleus</location>
    </subcellularLocation>
    <subcellularLocation>
        <location evidence="1">Chromosome</location>
    </subcellularLocation>
</comment>
<comment type="developmental stage">
    <text>This histone is expressed during late embryonic development.</text>
</comment>
<comment type="PTM">
    <text evidence="1">Acetylation is generally linked to gene activation.</text>
</comment>
<comment type="PTM">
    <text evidence="1">Methylation at Lys-5 is linked to gene activation. Methylation at Lys-10 is linked to gene repression (By similarity).</text>
</comment>
<comment type="similarity">
    <text evidence="3">Belongs to the histone H3 family.</text>
</comment>
<dbReference type="EMBL" id="M36921">
    <property type="protein sequence ID" value="AAA30053.1"/>
    <property type="molecule type" value="Genomic_DNA"/>
</dbReference>
<dbReference type="SMR" id="P69079"/>
<dbReference type="GO" id="GO:0000786">
    <property type="term" value="C:nucleosome"/>
    <property type="evidence" value="ECO:0007669"/>
    <property type="project" value="UniProtKB-KW"/>
</dbReference>
<dbReference type="GO" id="GO:0005634">
    <property type="term" value="C:nucleus"/>
    <property type="evidence" value="ECO:0007669"/>
    <property type="project" value="UniProtKB-SubCell"/>
</dbReference>
<dbReference type="GO" id="GO:0003677">
    <property type="term" value="F:DNA binding"/>
    <property type="evidence" value="ECO:0007669"/>
    <property type="project" value="UniProtKB-KW"/>
</dbReference>
<dbReference type="GO" id="GO:0046982">
    <property type="term" value="F:protein heterodimerization activity"/>
    <property type="evidence" value="ECO:0007669"/>
    <property type="project" value="InterPro"/>
</dbReference>
<dbReference type="GO" id="GO:0030527">
    <property type="term" value="F:structural constituent of chromatin"/>
    <property type="evidence" value="ECO:0007669"/>
    <property type="project" value="InterPro"/>
</dbReference>
<dbReference type="CDD" id="cd22911">
    <property type="entry name" value="HFD_H3"/>
    <property type="match status" value="1"/>
</dbReference>
<dbReference type="FunFam" id="1.10.20.10:FF:000078">
    <property type="entry name" value="Histone H3"/>
    <property type="match status" value="1"/>
</dbReference>
<dbReference type="FunFam" id="1.10.20.10:FF:000044">
    <property type="entry name" value="Histone H3.3"/>
    <property type="match status" value="1"/>
</dbReference>
<dbReference type="Gene3D" id="1.10.20.10">
    <property type="entry name" value="Histone, subunit A"/>
    <property type="match status" value="1"/>
</dbReference>
<dbReference type="InterPro" id="IPR009072">
    <property type="entry name" value="Histone-fold"/>
</dbReference>
<dbReference type="InterPro" id="IPR007125">
    <property type="entry name" value="Histone_H2A/H2B/H3"/>
</dbReference>
<dbReference type="InterPro" id="IPR000164">
    <property type="entry name" value="Histone_H3/CENP-A"/>
</dbReference>
<dbReference type="PANTHER" id="PTHR11426">
    <property type="entry name" value="HISTONE H3"/>
    <property type="match status" value="1"/>
</dbReference>
<dbReference type="Pfam" id="PF00125">
    <property type="entry name" value="Histone"/>
    <property type="match status" value="1"/>
</dbReference>
<dbReference type="PRINTS" id="PR00622">
    <property type="entry name" value="HISTONEH3"/>
</dbReference>
<dbReference type="SMART" id="SM00428">
    <property type="entry name" value="H3"/>
    <property type="match status" value="1"/>
</dbReference>
<dbReference type="SUPFAM" id="SSF47113">
    <property type="entry name" value="Histone-fold"/>
    <property type="match status" value="1"/>
</dbReference>
<dbReference type="PROSITE" id="PS00322">
    <property type="entry name" value="HISTONE_H3_1"/>
    <property type="match status" value="1"/>
</dbReference>
<dbReference type="PROSITE" id="PS00959">
    <property type="entry name" value="HISTONE_H3_2"/>
    <property type="match status" value="1"/>
</dbReference>
<organism>
    <name type="scientific">Strongylocentrotus droebachiensis</name>
    <name type="common">Green sea urchin</name>
    <dbReference type="NCBI Taxonomy" id="7671"/>
    <lineage>
        <taxon>Eukaryota</taxon>
        <taxon>Metazoa</taxon>
        <taxon>Echinodermata</taxon>
        <taxon>Eleutherozoa</taxon>
        <taxon>Echinozoa</taxon>
        <taxon>Echinoidea</taxon>
        <taxon>Euechinoidea</taxon>
        <taxon>Echinacea</taxon>
        <taxon>Camarodonta</taxon>
        <taxon>Echinidea</taxon>
        <taxon>Strongylocentrotidae</taxon>
        <taxon>Strongylocentrotus</taxon>
    </lineage>
</organism>
<reference key="1">
    <citation type="journal article" date="1982" name="EMBO J.">
        <title>An unusual evolutionary behaviour of a sea urchin histone gene cluster.</title>
        <authorList>
            <person name="Busslinger M."/>
            <person name="Rusconi S."/>
            <person name="Birnstiel M.L."/>
        </authorList>
    </citation>
    <scope>NUCLEOTIDE SEQUENCE [GENOMIC DNA]</scope>
</reference>
<sequence>MARTKQTARKSTGGKAPRKQLATKAARKSAPATGGVKKPHRYRPGTVALREIRRYQKSTELLIRKLPFQRLVREIAQDFKTELRFQSSAVMALQEASEAYLVGLFEDTNLCAIHAKRVTIMPKDIQLARRIRGERA</sequence>
<protein>
    <recommendedName>
        <fullName>Histone H3, embryonic</fullName>
    </recommendedName>
</protein>
<keyword id="KW-0007">Acetylation</keyword>
<keyword id="KW-0158">Chromosome</keyword>
<keyword id="KW-0238">DNA-binding</keyword>
<keyword id="KW-0488">Methylation</keyword>
<keyword id="KW-0544">Nucleosome core</keyword>
<keyword id="KW-0539">Nucleus</keyword>
<keyword id="KW-0597">Phosphoprotein</keyword>
<feature type="initiator methionine" description="Removed" evidence="1">
    <location>
        <position position="1"/>
    </location>
</feature>
<feature type="chain" id="PRO_0000221319" description="Histone H3, embryonic">
    <location>
        <begin position="2"/>
        <end position="136"/>
    </location>
</feature>
<feature type="region of interest" description="Disordered" evidence="2">
    <location>
        <begin position="1"/>
        <end position="43"/>
    </location>
</feature>
<feature type="modified residue" description="N6-methylated lysine" evidence="1">
    <location>
        <position position="5"/>
    </location>
</feature>
<feature type="modified residue" description="N6-acetyllysine; alternate" evidence="1">
    <location>
        <position position="10"/>
    </location>
</feature>
<feature type="modified residue" description="N6-methylated lysine; alternate" evidence="1">
    <location>
        <position position="10"/>
    </location>
</feature>
<feature type="modified residue" description="Phosphoserine" evidence="1">
    <location>
        <position position="11"/>
    </location>
</feature>
<feature type="modified residue" description="N6-acetyllysine" evidence="1">
    <location>
        <position position="15"/>
    </location>
</feature>
<feature type="modified residue" description="N6-acetyllysine" evidence="1">
    <location>
        <position position="24"/>
    </location>
</feature>
<feature type="modified residue" description="N6-methylated lysine" evidence="1">
    <location>
        <position position="28"/>
    </location>
</feature>
<feature type="modified residue" description="N6-methylated lysine" evidence="1">
    <location>
        <position position="37"/>
    </location>
</feature>
<feature type="modified residue" description="N6-methylated lysine" evidence="1">
    <location>
        <position position="80"/>
    </location>
</feature>
<evidence type="ECO:0000250" key="1"/>
<evidence type="ECO:0000256" key="2">
    <source>
        <dbReference type="SAM" id="MobiDB-lite"/>
    </source>
</evidence>
<evidence type="ECO:0000305" key="3"/>
<accession>P69079</accession>
<accession>P02298</accession>
<accession>P05320</accession>
<accession>P05321</accession>
<accession>P05322</accession>